<name>MURD_SACD2</name>
<accession>Q21MH1</accession>
<organism>
    <name type="scientific">Saccharophagus degradans (strain 2-40 / ATCC 43961 / DSM 17024)</name>
    <dbReference type="NCBI Taxonomy" id="203122"/>
    <lineage>
        <taxon>Bacteria</taxon>
        <taxon>Pseudomonadati</taxon>
        <taxon>Pseudomonadota</taxon>
        <taxon>Gammaproteobacteria</taxon>
        <taxon>Cellvibrionales</taxon>
        <taxon>Cellvibrionaceae</taxon>
        <taxon>Saccharophagus</taxon>
    </lineage>
</organism>
<dbReference type="EC" id="6.3.2.9" evidence="1"/>
<dbReference type="EMBL" id="CP000282">
    <property type="protein sequence ID" value="ABD80108.1"/>
    <property type="molecule type" value="Genomic_DNA"/>
</dbReference>
<dbReference type="RefSeq" id="WP_011467329.1">
    <property type="nucleotide sequence ID" value="NC_007912.1"/>
</dbReference>
<dbReference type="SMR" id="Q21MH1"/>
<dbReference type="STRING" id="203122.Sde_0846"/>
<dbReference type="GeneID" id="98612528"/>
<dbReference type="KEGG" id="sde:Sde_0846"/>
<dbReference type="eggNOG" id="COG0771">
    <property type="taxonomic scope" value="Bacteria"/>
</dbReference>
<dbReference type="HOGENOM" id="CLU_032540_1_0_6"/>
<dbReference type="OrthoDB" id="9809796at2"/>
<dbReference type="UniPathway" id="UPA00219"/>
<dbReference type="Proteomes" id="UP000001947">
    <property type="component" value="Chromosome"/>
</dbReference>
<dbReference type="GO" id="GO:0005737">
    <property type="term" value="C:cytoplasm"/>
    <property type="evidence" value="ECO:0007669"/>
    <property type="project" value="UniProtKB-SubCell"/>
</dbReference>
<dbReference type="GO" id="GO:0005524">
    <property type="term" value="F:ATP binding"/>
    <property type="evidence" value="ECO:0007669"/>
    <property type="project" value="UniProtKB-UniRule"/>
</dbReference>
<dbReference type="GO" id="GO:0008764">
    <property type="term" value="F:UDP-N-acetylmuramoylalanine-D-glutamate ligase activity"/>
    <property type="evidence" value="ECO:0007669"/>
    <property type="project" value="UniProtKB-UniRule"/>
</dbReference>
<dbReference type="GO" id="GO:0051301">
    <property type="term" value="P:cell division"/>
    <property type="evidence" value="ECO:0007669"/>
    <property type="project" value="UniProtKB-KW"/>
</dbReference>
<dbReference type="GO" id="GO:0071555">
    <property type="term" value="P:cell wall organization"/>
    <property type="evidence" value="ECO:0007669"/>
    <property type="project" value="UniProtKB-KW"/>
</dbReference>
<dbReference type="GO" id="GO:0009252">
    <property type="term" value="P:peptidoglycan biosynthetic process"/>
    <property type="evidence" value="ECO:0007669"/>
    <property type="project" value="UniProtKB-UniRule"/>
</dbReference>
<dbReference type="GO" id="GO:0008360">
    <property type="term" value="P:regulation of cell shape"/>
    <property type="evidence" value="ECO:0007669"/>
    <property type="project" value="UniProtKB-KW"/>
</dbReference>
<dbReference type="Gene3D" id="3.90.190.20">
    <property type="entry name" value="Mur ligase, C-terminal domain"/>
    <property type="match status" value="1"/>
</dbReference>
<dbReference type="Gene3D" id="3.40.1190.10">
    <property type="entry name" value="Mur-like, catalytic domain"/>
    <property type="match status" value="1"/>
</dbReference>
<dbReference type="Gene3D" id="3.40.50.720">
    <property type="entry name" value="NAD(P)-binding Rossmann-like Domain"/>
    <property type="match status" value="1"/>
</dbReference>
<dbReference type="HAMAP" id="MF_00639">
    <property type="entry name" value="MurD"/>
    <property type="match status" value="1"/>
</dbReference>
<dbReference type="InterPro" id="IPR036565">
    <property type="entry name" value="Mur-like_cat_sf"/>
</dbReference>
<dbReference type="InterPro" id="IPR004101">
    <property type="entry name" value="Mur_ligase_C"/>
</dbReference>
<dbReference type="InterPro" id="IPR036615">
    <property type="entry name" value="Mur_ligase_C_dom_sf"/>
</dbReference>
<dbReference type="InterPro" id="IPR013221">
    <property type="entry name" value="Mur_ligase_cen"/>
</dbReference>
<dbReference type="InterPro" id="IPR005762">
    <property type="entry name" value="MurD"/>
</dbReference>
<dbReference type="NCBIfam" id="TIGR01087">
    <property type="entry name" value="murD"/>
    <property type="match status" value="1"/>
</dbReference>
<dbReference type="PANTHER" id="PTHR43692">
    <property type="entry name" value="UDP-N-ACETYLMURAMOYLALANINE--D-GLUTAMATE LIGASE"/>
    <property type="match status" value="1"/>
</dbReference>
<dbReference type="PANTHER" id="PTHR43692:SF1">
    <property type="entry name" value="UDP-N-ACETYLMURAMOYLALANINE--D-GLUTAMATE LIGASE"/>
    <property type="match status" value="1"/>
</dbReference>
<dbReference type="Pfam" id="PF02875">
    <property type="entry name" value="Mur_ligase_C"/>
    <property type="match status" value="1"/>
</dbReference>
<dbReference type="Pfam" id="PF08245">
    <property type="entry name" value="Mur_ligase_M"/>
    <property type="match status" value="1"/>
</dbReference>
<dbReference type="Pfam" id="PF21799">
    <property type="entry name" value="MurD-like_N"/>
    <property type="match status" value="1"/>
</dbReference>
<dbReference type="SUPFAM" id="SSF51984">
    <property type="entry name" value="MurCD N-terminal domain"/>
    <property type="match status" value="1"/>
</dbReference>
<dbReference type="SUPFAM" id="SSF53623">
    <property type="entry name" value="MurD-like peptide ligases, catalytic domain"/>
    <property type="match status" value="1"/>
</dbReference>
<dbReference type="SUPFAM" id="SSF53244">
    <property type="entry name" value="MurD-like peptide ligases, peptide-binding domain"/>
    <property type="match status" value="1"/>
</dbReference>
<reference key="1">
    <citation type="journal article" date="2008" name="PLoS Genet.">
        <title>Complete genome sequence of the complex carbohydrate-degrading marine bacterium, Saccharophagus degradans strain 2-40 T.</title>
        <authorList>
            <person name="Weiner R.M."/>
            <person name="Taylor L.E. II"/>
            <person name="Henrissat B."/>
            <person name="Hauser L."/>
            <person name="Land M."/>
            <person name="Coutinho P.M."/>
            <person name="Rancurel C."/>
            <person name="Saunders E.H."/>
            <person name="Longmire A.G."/>
            <person name="Zhang H."/>
            <person name="Bayer E.A."/>
            <person name="Gilbert H.J."/>
            <person name="Larimer F."/>
            <person name="Zhulin I.B."/>
            <person name="Ekborg N.A."/>
            <person name="Lamed R."/>
            <person name="Richardson P.M."/>
            <person name="Borovok I."/>
            <person name="Hutcheson S."/>
        </authorList>
    </citation>
    <scope>NUCLEOTIDE SEQUENCE [LARGE SCALE GENOMIC DNA]</scope>
    <source>
        <strain>2-40 / ATCC 43961 / DSM 17024</strain>
    </source>
</reference>
<feature type="chain" id="PRO_0000257234" description="UDP-N-acetylmuramoylalanine--D-glutamate ligase">
    <location>
        <begin position="1"/>
        <end position="456"/>
    </location>
</feature>
<feature type="binding site" evidence="1">
    <location>
        <begin position="122"/>
        <end position="128"/>
    </location>
    <ligand>
        <name>ATP</name>
        <dbReference type="ChEBI" id="CHEBI:30616"/>
    </ligand>
</feature>
<keyword id="KW-0067">ATP-binding</keyword>
<keyword id="KW-0131">Cell cycle</keyword>
<keyword id="KW-0132">Cell division</keyword>
<keyword id="KW-0133">Cell shape</keyword>
<keyword id="KW-0961">Cell wall biogenesis/degradation</keyword>
<keyword id="KW-0963">Cytoplasm</keyword>
<keyword id="KW-0436">Ligase</keyword>
<keyword id="KW-0547">Nucleotide-binding</keyword>
<keyword id="KW-0573">Peptidoglycan synthesis</keyword>
<keyword id="KW-1185">Reference proteome</keyword>
<protein>
    <recommendedName>
        <fullName evidence="1">UDP-N-acetylmuramoylalanine--D-glutamate ligase</fullName>
        <ecNumber evidence="1">6.3.2.9</ecNumber>
    </recommendedName>
    <alternativeName>
        <fullName evidence="1">D-glutamic acid-adding enzyme</fullName>
    </alternativeName>
    <alternativeName>
        <fullName evidence="1">UDP-N-acetylmuramoyl-L-alanyl-D-glutamate synthetase</fullName>
    </alternativeName>
</protein>
<gene>
    <name evidence="1" type="primary">murD</name>
    <name type="ordered locus">Sde_0846</name>
</gene>
<proteinExistence type="inferred from homology"/>
<comment type="function">
    <text evidence="1">Cell wall formation. Catalyzes the addition of glutamate to the nucleotide precursor UDP-N-acetylmuramoyl-L-alanine (UMA).</text>
</comment>
<comment type="catalytic activity">
    <reaction evidence="1">
        <text>UDP-N-acetyl-alpha-D-muramoyl-L-alanine + D-glutamate + ATP = UDP-N-acetyl-alpha-D-muramoyl-L-alanyl-D-glutamate + ADP + phosphate + H(+)</text>
        <dbReference type="Rhea" id="RHEA:16429"/>
        <dbReference type="ChEBI" id="CHEBI:15378"/>
        <dbReference type="ChEBI" id="CHEBI:29986"/>
        <dbReference type="ChEBI" id="CHEBI:30616"/>
        <dbReference type="ChEBI" id="CHEBI:43474"/>
        <dbReference type="ChEBI" id="CHEBI:83898"/>
        <dbReference type="ChEBI" id="CHEBI:83900"/>
        <dbReference type="ChEBI" id="CHEBI:456216"/>
        <dbReference type="EC" id="6.3.2.9"/>
    </reaction>
</comment>
<comment type="pathway">
    <text evidence="1">Cell wall biogenesis; peptidoglycan biosynthesis.</text>
</comment>
<comment type="subcellular location">
    <subcellularLocation>
        <location evidence="1">Cytoplasm</location>
    </subcellularLocation>
</comment>
<comment type="similarity">
    <text evidence="1">Belongs to the MurCDEF family.</text>
</comment>
<sequence length="456" mass="48010">MANLIATDNPIVVVGMGLTGLSVARYLANKGANFFLLDTRKDLPKSTWQQVAELQAKCPSMKVDNGSLDVELLTSAKQIVLSPGVPLATPEIQQAKAAGVEIIGDIDLFLAERKAPVVGITGSNGKSTVTTLVGLAAENAGMNVAVGGNIGVPVLDLLADADVELYVLELSSFQLESVKRAQLDVACVLNVSPDHMDRYPSLAHYCQAKQRIYFGAKKIVYNLEDTLTIPPVMAGVERYGFSSKKAVEENEKHVLLNNDTNALSLNGQDVFSVADIKIAGAHNLKNALAALAICDAANIPFAGLKQALQEFEGLPHRCQWVANKNGVTYINDSKATNIGSAQAAIEGLAGQFKNIVLIAGGDGKGADFSSLGKVINQYVSAVVLIGVDAPKIQAVVDPQVMCVKAQTLNAAVKQAALLAKSGDLVLLSPACASLDMFANYEARGHEFALTVAEVSA</sequence>
<evidence type="ECO:0000255" key="1">
    <source>
        <dbReference type="HAMAP-Rule" id="MF_00639"/>
    </source>
</evidence>